<organism>
    <name type="scientific">Cucumber mosaic virus (strain Ixora)</name>
    <name type="common">CMV</name>
    <dbReference type="NCBI Taxonomy" id="117114"/>
    <lineage>
        <taxon>Viruses</taxon>
        <taxon>Riboviria</taxon>
        <taxon>Orthornavirae</taxon>
        <taxon>Kitrinoviricota</taxon>
        <taxon>Alsuviricetes</taxon>
        <taxon>Martellivirales</taxon>
        <taxon>Bromoviridae</taxon>
        <taxon>Cucumovirus</taxon>
        <taxon>Cucumber mosaic virus</taxon>
    </lineage>
</organism>
<organismHost>
    <name type="scientific">Cucumis sativus</name>
    <name type="common">Cucumber</name>
    <dbReference type="NCBI Taxonomy" id="3659"/>
</organismHost>
<organismHost>
    <name type="scientific">Solanum lycopersicum</name>
    <name type="common">Tomato</name>
    <name type="synonym">Lycopersicon esculentum</name>
    <dbReference type="NCBI Taxonomy" id="4081"/>
</organismHost>
<organismHost>
    <name type="scientific">Spinacia oleracea</name>
    <name type="common">Spinach</name>
    <dbReference type="NCBI Taxonomy" id="3562"/>
</organismHost>
<proteinExistence type="inferred from homology"/>
<feature type="chain" id="PRO_0000083260" description="Replication protein 1a">
    <location>
        <begin position="1"/>
        <end position="993"/>
    </location>
</feature>
<feature type="domain" description="Alphavirus-like MT" evidence="3">
    <location>
        <begin position="72"/>
        <end position="290"/>
    </location>
</feature>
<feature type="domain" description="(+)RNA virus helicase ATP-binding">
    <location>
        <begin position="684"/>
        <end position="838"/>
    </location>
</feature>
<feature type="domain" description="(+)RNA virus helicase C-terminal">
    <location>
        <begin position="839"/>
        <end position="993"/>
    </location>
</feature>
<feature type="region of interest" description="Methyltransferase">
    <location>
        <begin position="51"/>
        <end position="409"/>
    </location>
</feature>
<feature type="region of interest" description="Disordered" evidence="4">
    <location>
        <begin position="543"/>
        <end position="576"/>
    </location>
</feature>
<feature type="region of interest" description="ATP-dependent helicase">
    <location>
        <begin position="712"/>
        <end position="975"/>
    </location>
</feature>
<feature type="binding site" evidence="2">
    <location>
        <begin position="714"/>
        <end position="721"/>
    </location>
    <ligand>
        <name>ATP</name>
        <dbReference type="ChEBI" id="CHEBI:30616"/>
    </ligand>
</feature>
<accession>Q66121</accession>
<dbReference type="EC" id="3.6.4.-"/>
<dbReference type="EC" id="2.1.1.-"/>
<dbReference type="EMBL" id="U20220">
    <property type="protein sequence ID" value="AAC54620.1"/>
    <property type="molecule type" value="Genomic_RNA"/>
</dbReference>
<dbReference type="PIR" id="E71392">
    <property type="entry name" value="E71392"/>
</dbReference>
<dbReference type="SMR" id="Q66121"/>
<dbReference type="Proteomes" id="UP000246998">
    <property type="component" value="Genome"/>
</dbReference>
<dbReference type="GO" id="GO:0044167">
    <property type="term" value="C:host cell endoplasmic reticulum membrane"/>
    <property type="evidence" value="ECO:0007669"/>
    <property type="project" value="UniProtKB-SubCell"/>
</dbReference>
<dbReference type="GO" id="GO:0016020">
    <property type="term" value="C:membrane"/>
    <property type="evidence" value="ECO:0007669"/>
    <property type="project" value="UniProtKB-KW"/>
</dbReference>
<dbReference type="GO" id="GO:0005524">
    <property type="term" value="F:ATP binding"/>
    <property type="evidence" value="ECO:0007669"/>
    <property type="project" value="UniProtKB-KW"/>
</dbReference>
<dbReference type="GO" id="GO:0004386">
    <property type="term" value="F:helicase activity"/>
    <property type="evidence" value="ECO:0007669"/>
    <property type="project" value="UniProtKB-KW"/>
</dbReference>
<dbReference type="GO" id="GO:0016817">
    <property type="term" value="F:hydrolase activity, acting on acid anhydrides"/>
    <property type="evidence" value="ECO:0007669"/>
    <property type="project" value="InterPro"/>
</dbReference>
<dbReference type="GO" id="GO:0008174">
    <property type="term" value="F:mRNA methyltransferase activity"/>
    <property type="evidence" value="ECO:0007669"/>
    <property type="project" value="InterPro"/>
</dbReference>
<dbReference type="GO" id="GO:0003723">
    <property type="term" value="F:RNA binding"/>
    <property type="evidence" value="ECO:0007669"/>
    <property type="project" value="InterPro"/>
</dbReference>
<dbReference type="GO" id="GO:0032259">
    <property type="term" value="P:methylation"/>
    <property type="evidence" value="ECO:0007669"/>
    <property type="project" value="UniProtKB-KW"/>
</dbReference>
<dbReference type="GO" id="GO:0016556">
    <property type="term" value="P:mRNA modification"/>
    <property type="evidence" value="ECO:0007669"/>
    <property type="project" value="InterPro"/>
</dbReference>
<dbReference type="GO" id="GO:0006396">
    <property type="term" value="P:RNA processing"/>
    <property type="evidence" value="ECO:0007669"/>
    <property type="project" value="InterPro"/>
</dbReference>
<dbReference type="Gene3D" id="3.40.50.300">
    <property type="entry name" value="P-loop containing nucleotide triphosphate hydrolases"/>
    <property type="match status" value="2"/>
</dbReference>
<dbReference type="InterPro" id="IPR027351">
    <property type="entry name" value="(+)RNA_virus_helicase_core_dom"/>
</dbReference>
<dbReference type="InterPro" id="IPR021002">
    <property type="entry name" value="1a_necrotic_phenotyp-det_dom"/>
</dbReference>
<dbReference type="InterPro" id="IPR002588">
    <property type="entry name" value="Alphavirus-like_MT_dom"/>
</dbReference>
<dbReference type="InterPro" id="IPR022184">
    <property type="entry name" value="CMV_1a_C"/>
</dbReference>
<dbReference type="InterPro" id="IPR027417">
    <property type="entry name" value="P-loop_NTPase"/>
</dbReference>
<dbReference type="Pfam" id="PF12467">
    <property type="entry name" value="CMV_1a"/>
    <property type="match status" value="1"/>
</dbReference>
<dbReference type="Pfam" id="PF12503">
    <property type="entry name" value="CMV_1a_C"/>
    <property type="match status" value="1"/>
</dbReference>
<dbReference type="Pfam" id="PF01443">
    <property type="entry name" value="Viral_helicase1"/>
    <property type="match status" value="1"/>
</dbReference>
<dbReference type="Pfam" id="PF01660">
    <property type="entry name" value="Vmethyltransf"/>
    <property type="match status" value="1"/>
</dbReference>
<dbReference type="SUPFAM" id="SSF52540">
    <property type="entry name" value="P-loop containing nucleoside triphosphate hydrolases"/>
    <property type="match status" value="1"/>
</dbReference>
<dbReference type="PROSITE" id="PS51743">
    <property type="entry name" value="ALPHAVIRUS_MT"/>
    <property type="match status" value="1"/>
</dbReference>
<dbReference type="PROSITE" id="PS51657">
    <property type="entry name" value="PSRV_HELICASE"/>
    <property type="match status" value="1"/>
</dbReference>
<gene>
    <name type="ORF">ORF1a</name>
</gene>
<comment type="function">
    <text evidence="1">Involved in the virus replication. Contains a helicase domain and a methyltransferase domain. The methyltransferase domain is probably involved in viral RNA capping. Involved in the formation of ER membrane spherular invaginations in which RNA replication complexes form (By similarity).</text>
</comment>
<comment type="subunit">
    <text evidence="1">Interacts with RNA-directed RNA polymerase 2a.</text>
</comment>
<comment type="subcellular location">
    <subcellularLocation>
        <location evidence="1">Host endoplasmic reticulum membrane</location>
        <topology evidence="1">Peripheral membrane protein</topology>
    </subcellularLocation>
</comment>
<comment type="similarity">
    <text evidence="5">Belongs to the bromoviridae replication protein 1a family.</text>
</comment>
<protein>
    <recommendedName>
        <fullName>Replication protein 1a</fullName>
    </recommendedName>
    <domain>
        <recommendedName>
            <fullName>ATP-dependent helicase</fullName>
            <ecNumber>3.6.4.-</ecNumber>
        </recommendedName>
    </domain>
    <domain>
        <recommendedName>
            <fullName>Methyltransferase</fullName>
            <ecNumber>2.1.1.-</ecNumber>
        </recommendedName>
    </domain>
</protein>
<keyword id="KW-0067">ATP-binding</keyword>
<keyword id="KW-0347">Helicase</keyword>
<keyword id="KW-1038">Host endoplasmic reticulum</keyword>
<keyword id="KW-1043">Host membrane</keyword>
<keyword id="KW-0378">Hydrolase</keyword>
<keyword id="KW-0472">Membrane</keyword>
<keyword id="KW-0489">Methyltransferase</keyword>
<keyword id="KW-0547">Nucleotide-binding</keyword>
<keyword id="KW-0808">Transferase</keyword>
<reference key="1">
    <citation type="journal article" date="1995" name="J. Gen. Virol.">
        <title>The complete sequence of a cucumber mosaic virus from Ixora that is deficient in the replication of satellite RNAs.</title>
        <authorList>
            <person name="McGarvey P.B."/>
            <person name="Tousignant M."/>
            <person name="Geletka L."/>
            <person name="Cellini F."/>
            <person name="Kaper J.M."/>
        </authorList>
    </citation>
    <scope>NUCLEOTIDE SEQUENCE [GENOMIC RNA]</scope>
</reference>
<sequence>MATSSFNINELVASHGDKGLLATALVDKTAHEQLEEQLQHQRRGRKVYIRNVLGVKDSEVIRNRYGGKYDLHLTQQEFAPHGLAGALRLCETLDCLDSFPSSGLRQDLVLDFGGSWVTHYLRGHNVHCCSPCLGIRDKMRHAERLMNMRKIILNDPQQFDGRQPDFCTHPAAECDVQAHFAISIHGGYDMGFRGLCEAMNAHGTTILKGTMMFDGAMMFDDQGVIPELNCQWRKIRSAFSETEDVTPLSGKLNSTVFSRVRKFKTMVAFDFINESTMSYVHDWENIRSFLTDQTYSYRGMTYGIERCVIHAGIMTYKIIGVPGMCPPELIRHCIWFPSIKDYVGLKIPASQDLVEWKTVRYLTSTLRETEEIAMRCYNDKKAWMEQFKVILGVLSAKSSTIVINGMSMQSGERIDINDYHYIGLAILLHTKMKYEQLGKMYDMWNASSISKWFAALTRPLRVFFSSVVHALFPTLRPREEKEFLIKLSTFVTFNEECSFDGGEEWDVISSAAYVATQAVTDGKVLAAQKAEKLAEKLAQPVIEVSDRPEAPSPTPDDPADVCGKEQEVSELDSLSAQTRSPITRVAERATAMLEYAAYEKQLHDTTVSNLKRIWNMAGGDDKRNSLEGNLKFVFDTYFTVDPMVNIHFSTGKWMRPVPEGIVYSVGFNEHGLGPKSDGELYIVNSECVVCNNESLSNVTRSLQAPTGTISQVDGVAGCGKTTAIKSIFEPSTDMVVTANKKSAQDVRMALFKSSDSKEACTFVRTADSVLLNECPTVSRVLVDEVVLLHFGQLCAVMSKLKAVRAICFGDSEQIAFSSRDASFDMRFSKIIPDETSDADTTFRSPQDVVPLVRLMATKALPRGTHSKYTKWVSQSKVKRSVTSRAISSVTLVDLDSSRFYITMTQADKASLISRAKEMNLPKTFWNERIKTVHESQGISEDHVTLVRLKSTKCDLFKQFSYCLVALTRHKVTFRYEHCGILNGDLIAECIARA</sequence>
<evidence type="ECO:0000250" key="1"/>
<evidence type="ECO:0000255" key="2"/>
<evidence type="ECO:0000255" key="3">
    <source>
        <dbReference type="PROSITE-ProRule" id="PRU01079"/>
    </source>
</evidence>
<evidence type="ECO:0000256" key="4">
    <source>
        <dbReference type="SAM" id="MobiDB-lite"/>
    </source>
</evidence>
<evidence type="ECO:0000305" key="5"/>
<name>1A_CMVIX</name>